<name>BCSP_BRUAB</name>
<sequence>MKFGSKIRRLAVAAVAGAIALGASFAVAQAPTFFRIGTGGTAGTYYPIGGLIANAISGAGEKGVPGLVATAVSSNGSVANINAIKSGALESGFTQSDVAYWAYNGTGLYDGKGKVEDLRLLATLYPETIHIVARKDANIKSVADLKGKRVSLDEPGSGTIVDARIVLEAYGLTEDDIKAEHLKPGPAGERLKDGALDAYFFVGGYPTGAISELAISNGISLVPISGPEADKILEKYSFFSKDVVPAGAYKDVAETPTLAVAAQWVTSAKQPDDLIYNITKVLWNEDTRKALDAGHAKGKLIKLDSATSSLGIPLHPGAERFYKEAGVLK</sequence>
<gene>
    <name type="primary">bcsP31</name>
    <name type="ordered locus">BruAb1_1199</name>
</gene>
<keyword id="KW-0732">Signal</keyword>
<organism>
    <name type="scientific">Brucella abortus biovar 1 (strain 9-941)</name>
    <dbReference type="NCBI Taxonomy" id="262698"/>
    <lineage>
        <taxon>Bacteria</taxon>
        <taxon>Pseudomonadati</taxon>
        <taxon>Pseudomonadota</taxon>
        <taxon>Alphaproteobacteria</taxon>
        <taxon>Hyphomicrobiales</taxon>
        <taxon>Brucellaceae</taxon>
        <taxon>Brucella/Ochrobactrum group</taxon>
        <taxon>Brucella</taxon>
    </lineage>
</organism>
<comment type="miscellaneous">
    <text>Brucella abortus is the causative agent for brucellosis in cattle and man.</text>
</comment>
<protein>
    <recommendedName>
        <fullName>31 kDa immunogenic protein</fullName>
    </recommendedName>
</protein>
<dbReference type="EMBL" id="M20404">
    <property type="protein sequence ID" value="AAA22993.1"/>
    <property type="molecule type" value="Genomic_DNA"/>
</dbReference>
<dbReference type="EMBL" id="AE017223">
    <property type="protein sequence ID" value="AAX74537.1"/>
    <property type="molecule type" value="Genomic_DNA"/>
</dbReference>
<dbReference type="PIR" id="JT0279">
    <property type="entry name" value="IMBKBB"/>
</dbReference>
<dbReference type="RefSeq" id="WP_002964322.1">
    <property type="nucleotide sequence ID" value="NC_006932.1"/>
</dbReference>
<dbReference type="SMR" id="P0A3T3"/>
<dbReference type="EnsemblBacteria" id="AAX74537">
    <property type="protein sequence ID" value="AAX74537"/>
    <property type="gene ID" value="BruAb1_1199"/>
</dbReference>
<dbReference type="KEGG" id="bmb:BruAb1_1199"/>
<dbReference type="HOGENOM" id="CLU_033215_1_0_5"/>
<dbReference type="PRO" id="PR:P0A3T3"/>
<dbReference type="Proteomes" id="UP000000540">
    <property type="component" value="Chromosome I"/>
</dbReference>
<dbReference type="CDD" id="cd13520">
    <property type="entry name" value="PBP2_TAXI_TRAP"/>
    <property type="match status" value="1"/>
</dbReference>
<dbReference type="Gene3D" id="3.40.190.10">
    <property type="entry name" value="Periplasmic binding protein-like II"/>
    <property type="match status" value="2"/>
</dbReference>
<dbReference type="InterPro" id="IPR011852">
    <property type="entry name" value="TRAP_TAXI"/>
</dbReference>
<dbReference type="NCBIfam" id="TIGR02122">
    <property type="entry name" value="TRAP_TAXI"/>
    <property type="match status" value="1"/>
</dbReference>
<dbReference type="PANTHER" id="PTHR42941">
    <property type="entry name" value="SLL1037 PROTEIN"/>
    <property type="match status" value="1"/>
</dbReference>
<dbReference type="PANTHER" id="PTHR42941:SF1">
    <property type="entry name" value="SLL1037 PROTEIN"/>
    <property type="match status" value="1"/>
</dbReference>
<dbReference type="Pfam" id="PF16868">
    <property type="entry name" value="NMT1_3"/>
    <property type="match status" value="1"/>
</dbReference>
<dbReference type="SUPFAM" id="SSF53850">
    <property type="entry name" value="Periplasmic binding protein-like II"/>
    <property type="match status" value="1"/>
</dbReference>
<feature type="signal peptide">
    <location>
        <begin position="1"/>
        <end position="28"/>
    </location>
</feature>
<feature type="chain" id="PRO_0000020804" description="31 kDa immunogenic protein">
    <location>
        <begin position="29"/>
        <end position="329"/>
    </location>
</feature>
<accession>P0A3T3</accession>
<accession>P12920</accession>
<accession>Q57CU7</accession>
<reference key="1">
    <citation type="journal article" date="1988" name="Gene">
        <title>The cloning, expression, and nucleotide sequence of a gene coding for an immunogenic Brucella abortus protein.</title>
        <authorList>
            <person name="Mayfield J.E."/>
            <person name="Bricker B.J."/>
            <person name="Godfrey H."/>
            <person name="Crosby R.M."/>
            <person name="Knight D.J."/>
            <person name="Halling S.M."/>
            <person name="Balinsky D."/>
            <person name="Tabatabai L.B."/>
        </authorList>
    </citation>
    <scope>NUCLEOTIDE SEQUENCE [GENOMIC DNA]</scope>
</reference>
<reference key="2">
    <citation type="journal article" date="2005" name="J. Bacteriol.">
        <title>Completion of the genome sequence of Brucella abortus and comparison to the highly similar genomes of Brucella melitensis and Brucella suis.</title>
        <authorList>
            <person name="Halling S.M."/>
            <person name="Peterson-Burch B.D."/>
            <person name="Bricker B.J."/>
            <person name="Zuerner R.L."/>
            <person name="Qing Z."/>
            <person name="Li L.-L."/>
            <person name="Kapur V."/>
            <person name="Alt D.P."/>
            <person name="Olsen S.C."/>
        </authorList>
    </citation>
    <scope>NUCLEOTIDE SEQUENCE [LARGE SCALE GENOMIC DNA]</scope>
    <source>
        <strain>9-941</strain>
    </source>
</reference>
<proteinExistence type="predicted"/>